<reference key="1">
    <citation type="journal article" date="2001" name="Nature">
        <title>Complete genome sequence of a multiple drug resistant Salmonella enterica serovar Typhi CT18.</title>
        <authorList>
            <person name="Parkhill J."/>
            <person name="Dougan G."/>
            <person name="James K.D."/>
            <person name="Thomson N.R."/>
            <person name="Pickard D."/>
            <person name="Wain J."/>
            <person name="Churcher C.M."/>
            <person name="Mungall K.L."/>
            <person name="Bentley S.D."/>
            <person name="Holden M.T.G."/>
            <person name="Sebaihia M."/>
            <person name="Baker S."/>
            <person name="Basham D."/>
            <person name="Brooks K."/>
            <person name="Chillingworth T."/>
            <person name="Connerton P."/>
            <person name="Cronin A."/>
            <person name="Davis P."/>
            <person name="Davies R.M."/>
            <person name="Dowd L."/>
            <person name="White N."/>
            <person name="Farrar J."/>
            <person name="Feltwell T."/>
            <person name="Hamlin N."/>
            <person name="Haque A."/>
            <person name="Hien T.T."/>
            <person name="Holroyd S."/>
            <person name="Jagels K."/>
            <person name="Krogh A."/>
            <person name="Larsen T.S."/>
            <person name="Leather S."/>
            <person name="Moule S."/>
            <person name="O'Gaora P."/>
            <person name="Parry C."/>
            <person name="Quail M.A."/>
            <person name="Rutherford K.M."/>
            <person name="Simmonds M."/>
            <person name="Skelton J."/>
            <person name="Stevens K."/>
            <person name="Whitehead S."/>
            <person name="Barrell B.G."/>
        </authorList>
    </citation>
    <scope>NUCLEOTIDE SEQUENCE [LARGE SCALE GENOMIC DNA]</scope>
    <source>
        <strain>CT18</strain>
    </source>
</reference>
<reference key="2">
    <citation type="journal article" date="2003" name="J. Bacteriol.">
        <title>Comparative genomics of Salmonella enterica serovar Typhi strains Ty2 and CT18.</title>
        <authorList>
            <person name="Deng W."/>
            <person name="Liou S.-R."/>
            <person name="Plunkett G. III"/>
            <person name="Mayhew G.F."/>
            <person name="Rose D.J."/>
            <person name="Burland V."/>
            <person name="Kodoyianni V."/>
            <person name="Schwartz D.C."/>
            <person name="Blattner F.R."/>
        </authorList>
    </citation>
    <scope>NUCLEOTIDE SEQUENCE [LARGE SCALE GENOMIC DNA]</scope>
    <source>
        <strain>ATCC 700931 / Ty2</strain>
    </source>
</reference>
<protein>
    <recommendedName>
        <fullName evidence="1">Acetylornithine deacetylase</fullName>
        <shortName evidence="1">AO</shortName>
        <shortName evidence="1">Acetylornithinase</shortName>
        <ecNumber evidence="1">3.5.1.16</ecNumber>
    </recommendedName>
    <alternativeName>
        <fullName evidence="1">N-acetylornithinase</fullName>
        <shortName evidence="1">NAO</shortName>
    </alternativeName>
</protein>
<organism>
    <name type="scientific">Salmonella typhi</name>
    <dbReference type="NCBI Taxonomy" id="90370"/>
    <lineage>
        <taxon>Bacteria</taxon>
        <taxon>Pseudomonadati</taxon>
        <taxon>Pseudomonadota</taxon>
        <taxon>Gammaproteobacteria</taxon>
        <taxon>Enterobacterales</taxon>
        <taxon>Enterobacteriaceae</taxon>
        <taxon>Salmonella</taxon>
    </lineage>
</organism>
<accession>Q8Z308</accession>
<dbReference type="EC" id="3.5.1.16" evidence="1"/>
<dbReference type="EMBL" id="AL513382">
    <property type="protein sequence ID" value="CAD09509.1"/>
    <property type="molecule type" value="Genomic_DNA"/>
</dbReference>
<dbReference type="EMBL" id="AE014613">
    <property type="protein sequence ID" value="AAO71012.1"/>
    <property type="molecule type" value="Genomic_DNA"/>
</dbReference>
<dbReference type="RefSeq" id="NP_457939.1">
    <property type="nucleotide sequence ID" value="NC_003198.1"/>
</dbReference>
<dbReference type="SMR" id="Q8Z308"/>
<dbReference type="STRING" id="220341.gene:17587620"/>
<dbReference type="MEROPS" id="M20.974"/>
<dbReference type="KEGG" id="stt:t3504"/>
<dbReference type="KEGG" id="sty:STY3753"/>
<dbReference type="PATRIC" id="fig|220341.7.peg.3828"/>
<dbReference type="eggNOG" id="COG0624">
    <property type="taxonomic scope" value="Bacteria"/>
</dbReference>
<dbReference type="HOGENOM" id="CLU_021802_2_4_6"/>
<dbReference type="OMA" id="RLHKGVM"/>
<dbReference type="UniPathway" id="UPA00068">
    <property type="reaction ID" value="UER00110"/>
</dbReference>
<dbReference type="Proteomes" id="UP000000541">
    <property type="component" value="Chromosome"/>
</dbReference>
<dbReference type="Proteomes" id="UP000002670">
    <property type="component" value="Chromosome"/>
</dbReference>
<dbReference type="GO" id="GO:0005737">
    <property type="term" value="C:cytoplasm"/>
    <property type="evidence" value="ECO:0007669"/>
    <property type="project" value="UniProtKB-SubCell"/>
</dbReference>
<dbReference type="GO" id="GO:0008777">
    <property type="term" value="F:acetylornithine deacetylase activity"/>
    <property type="evidence" value="ECO:0007669"/>
    <property type="project" value="UniProtKB-UniRule"/>
</dbReference>
<dbReference type="GO" id="GO:0008270">
    <property type="term" value="F:zinc ion binding"/>
    <property type="evidence" value="ECO:0007669"/>
    <property type="project" value="UniProtKB-UniRule"/>
</dbReference>
<dbReference type="GO" id="GO:0006526">
    <property type="term" value="P:L-arginine biosynthetic process"/>
    <property type="evidence" value="ECO:0007669"/>
    <property type="project" value="UniProtKB-UniRule"/>
</dbReference>
<dbReference type="CDD" id="cd03894">
    <property type="entry name" value="M20_ArgE"/>
    <property type="match status" value="1"/>
</dbReference>
<dbReference type="FunFam" id="3.30.70.360:FF:000003">
    <property type="entry name" value="Acetylornithine deacetylase"/>
    <property type="match status" value="1"/>
</dbReference>
<dbReference type="Gene3D" id="3.30.70.360">
    <property type="match status" value="1"/>
</dbReference>
<dbReference type="Gene3D" id="3.40.630.10">
    <property type="entry name" value="Zn peptidases"/>
    <property type="match status" value="1"/>
</dbReference>
<dbReference type="HAMAP" id="MF_01108">
    <property type="entry name" value="ArgE"/>
    <property type="match status" value="1"/>
</dbReference>
<dbReference type="InterPro" id="IPR010169">
    <property type="entry name" value="AcOrn-deacetyl"/>
</dbReference>
<dbReference type="InterPro" id="IPR001261">
    <property type="entry name" value="ArgE/DapE_CS"/>
</dbReference>
<dbReference type="InterPro" id="IPR036264">
    <property type="entry name" value="Bact_exopeptidase_dim_dom"/>
</dbReference>
<dbReference type="InterPro" id="IPR002933">
    <property type="entry name" value="Peptidase_M20"/>
</dbReference>
<dbReference type="InterPro" id="IPR011650">
    <property type="entry name" value="Peptidase_M20_dimer"/>
</dbReference>
<dbReference type="InterPro" id="IPR050072">
    <property type="entry name" value="Peptidase_M20A"/>
</dbReference>
<dbReference type="NCBIfam" id="TIGR01892">
    <property type="entry name" value="AcOrn-deacetyl"/>
    <property type="match status" value="1"/>
</dbReference>
<dbReference type="NCBIfam" id="NF003474">
    <property type="entry name" value="PRK05111.1"/>
    <property type="match status" value="1"/>
</dbReference>
<dbReference type="PANTHER" id="PTHR43808">
    <property type="entry name" value="ACETYLORNITHINE DEACETYLASE"/>
    <property type="match status" value="1"/>
</dbReference>
<dbReference type="PANTHER" id="PTHR43808:SF1">
    <property type="entry name" value="ACETYLORNITHINE DEACETYLASE"/>
    <property type="match status" value="1"/>
</dbReference>
<dbReference type="Pfam" id="PF07687">
    <property type="entry name" value="M20_dimer"/>
    <property type="match status" value="1"/>
</dbReference>
<dbReference type="Pfam" id="PF01546">
    <property type="entry name" value="Peptidase_M20"/>
    <property type="match status" value="1"/>
</dbReference>
<dbReference type="SUPFAM" id="SSF55031">
    <property type="entry name" value="Bacterial exopeptidase dimerisation domain"/>
    <property type="match status" value="1"/>
</dbReference>
<dbReference type="SUPFAM" id="SSF53187">
    <property type="entry name" value="Zn-dependent exopeptidases"/>
    <property type="match status" value="1"/>
</dbReference>
<dbReference type="PROSITE" id="PS00758">
    <property type="entry name" value="ARGE_DAPE_CPG2_1"/>
    <property type="match status" value="1"/>
</dbReference>
<dbReference type="PROSITE" id="PS00759">
    <property type="entry name" value="ARGE_DAPE_CPG2_2"/>
    <property type="match status" value="1"/>
</dbReference>
<proteinExistence type="inferred from homology"/>
<keyword id="KW-0028">Amino-acid biosynthesis</keyword>
<keyword id="KW-0055">Arginine biosynthesis</keyword>
<keyword id="KW-0170">Cobalt</keyword>
<keyword id="KW-0963">Cytoplasm</keyword>
<keyword id="KW-0378">Hydrolase</keyword>
<keyword id="KW-0479">Metal-binding</keyword>
<keyword id="KW-0862">Zinc</keyword>
<gene>
    <name evidence="1" type="primary">argE</name>
    <name type="ordered locus">STY3753</name>
    <name type="ordered locus">t3504</name>
</gene>
<evidence type="ECO:0000255" key="1">
    <source>
        <dbReference type="HAMAP-Rule" id="MF_01108"/>
    </source>
</evidence>
<evidence type="ECO:0000305" key="2"/>
<feature type="chain" id="PRO_0000185248" description="Acetylornithine deacetylase">
    <location>
        <begin position="1"/>
        <end position="383"/>
    </location>
</feature>
<feature type="active site" evidence="1">
    <location>
        <position position="82"/>
    </location>
</feature>
<feature type="active site" evidence="1">
    <location>
        <position position="144"/>
    </location>
</feature>
<feature type="binding site" evidence="1">
    <location>
        <position position="80"/>
    </location>
    <ligand>
        <name>Zn(2+)</name>
        <dbReference type="ChEBI" id="CHEBI:29105"/>
        <label>1</label>
    </ligand>
</feature>
<feature type="binding site" evidence="1">
    <location>
        <position position="112"/>
    </location>
    <ligand>
        <name>Zn(2+)</name>
        <dbReference type="ChEBI" id="CHEBI:29105"/>
        <label>1</label>
    </ligand>
</feature>
<feature type="binding site" evidence="1">
    <location>
        <position position="112"/>
    </location>
    <ligand>
        <name>Zn(2+)</name>
        <dbReference type="ChEBI" id="CHEBI:29105"/>
        <label>2</label>
    </ligand>
</feature>
<feature type="binding site" evidence="1">
    <location>
        <position position="145"/>
    </location>
    <ligand>
        <name>Zn(2+)</name>
        <dbReference type="ChEBI" id="CHEBI:29105"/>
        <label>2</label>
    </ligand>
</feature>
<feature type="binding site" evidence="1">
    <location>
        <position position="169"/>
    </location>
    <ligand>
        <name>Zn(2+)</name>
        <dbReference type="ChEBI" id="CHEBI:29105"/>
        <label>1</label>
    </ligand>
</feature>
<feature type="binding site" evidence="1">
    <location>
        <position position="355"/>
    </location>
    <ligand>
        <name>Zn(2+)</name>
        <dbReference type="ChEBI" id="CHEBI:29105"/>
        <label>2</label>
    </ligand>
</feature>
<feature type="sequence conflict" description="In Ref. 2; AAO71012." evidence="2" ref="2">
    <original>C</original>
    <variation>G</variation>
    <location>
        <position position="349"/>
    </location>
</feature>
<name>ARGE_SALTI</name>
<sequence length="383" mass="42248">MKNVLPPFIEIYRALIATPSISATEESLDQSNASLITLLAGWFSDLGFNVEVQPVPGTRNKFNMLASTGHGAGGLLLTGHTDTVPFDDGRWTRDPFTLTEHDNKLYGLGTADMKGFFAFILDALRDVDVTKLKKPLYILATADEETSMAGARYFSETTALRPDCAIIGEPTSLQPIRAHKGHISNVVRVLGQSGHSSDPARGVNAIELMHDAIGHIMQLRDSLKARYHYEAFTVPYPTLNLGHIHGGDASNRICACCELHMDIRPLPGMTLNDLNGLLNDALAPVSERWPGRLTVAELHPPIPGYECPPDHQLVEVVEKLLGTKTDVVNYCTEAPFMQTLCPTLVLGPCSINQAHQPDEYLETRFIKPTRELITQVVHHFCWH</sequence>
<comment type="function">
    <text evidence="1">Catalyzes the hydrolysis of the amide bond of N(2)-acetylated L-amino acids. Cleaves the acetyl group from N-acetyl-L-ornithine to form L-ornithine, an intermediate in L-arginine biosynthesis pathway, and a branchpoint in the synthesis of polyamines.</text>
</comment>
<comment type="catalytic activity">
    <reaction evidence="1">
        <text>N(2)-acetyl-L-ornithine + H2O = L-ornithine + acetate</text>
        <dbReference type="Rhea" id="RHEA:15941"/>
        <dbReference type="ChEBI" id="CHEBI:15377"/>
        <dbReference type="ChEBI" id="CHEBI:30089"/>
        <dbReference type="ChEBI" id="CHEBI:46911"/>
        <dbReference type="ChEBI" id="CHEBI:57805"/>
        <dbReference type="EC" id="3.5.1.16"/>
    </reaction>
</comment>
<comment type="cofactor">
    <cofactor evidence="1">
        <name>Zn(2+)</name>
        <dbReference type="ChEBI" id="CHEBI:29105"/>
    </cofactor>
    <cofactor evidence="1">
        <name>Co(2+)</name>
        <dbReference type="ChEBI" id="CHEBI:48828"/>
    </cofactor>
    <text evidence="1">Binds 2 Zn(2+) or Co(2+) ions per subunit.</text>
</comment>
<comment type="cofactor">
    <cofactor evidence="1">
        <name>glutathione</name>
        <dbReference type="ChEBI" id="CHEBI:57925"/>
    </cofactor>
</comment>
<comment type="pathway">
    <text evidence="1">Amino-acid biosynthesis; L-arginine biosynthesis; L-ornithine from N(2)-acetyl-L-ornithine (linear): step 1/1.</text>
</comment>
<comment type="subunit">
    <text evidence="1">Homodimer.</text>
</comment>
<comment type="subcellular location">
    <subcellularLocation>
        <location evidence="1">Cytoplasm</location>
    </subcellularLocation>
</comment>
<comment type="similarity">
    <text evidence="1 2">Belongs to the peptidase M20A family. ArgE subfamily.</text>
</comment>